<evidence type="ECO:0000255" key="1">
    <source>
        <dbReference type="HAMAP-Rule" id="MF_00636"/>
    </source>
</evidence>
<sequence length="286" mass="32503">MRLIVVSGQSGAGKSVALRVLEDLGYYCVDNLPVSLLTAFIQSVQGSQQNVAVSIDIRNLPKEPSLVQDVLDQLKQNNDVSMLFLDASKETLLKRYSETRRIHPLSLSQSKPSLAQAIELEKQLLGPLKEQADLLLDSSNQSLHELSETVRMRIEGRERKDLVMVFQSFGFKYGLPTDADYVFDVRFLPNPHWEPDLRPLTGLDAPIKSFLEGHSEVMELKQQIQKFFEYWLPMLEKNNRSYLTIAIGCTGGKHRSVYLTQQLGEYFAQLGHQVQLRHTSLEKQQS</sequence>
<name>Y2532_VIBCH</name>
<comment type="function">
    <text evidence="1">Displays ATPase and GTPase activities.</text>
</comment>
<comment type="similarity">
    <text evidence="1">Belongs to the RapZ-like family.</text>
</comment>
<protein>
    <recommendedName>
        <fullName evidence="1">Nucleotide-binding protein VC_2532</fullName>
    </recommendedName>
</protein>
<accession>Q9KP47</accession>
<organism>
    <name type="scientific">Vibrio cholerae serotype O1 (strain ATCC 39315 / El Tor Inaba N16961)</name>
    <dbReference type="NCBI Taxonomy" id="243277"/>
    <lineage>
        <taxon>Bacteria</taxon>
        <taxon>Pseudomonadati</taxon>
        <taxon>Pseudomonadota</taxon>
        <taxon>Gammaproteobacteria</taxon>
        <taxon>Vibrionales</taxon>
        <taxon>Vibrionaceae</taxon>
        <taxon>Vibrio</taxon>
    </lineage>
</organism>
<dbReference type="EMBL" id="AE003852">
    <property type="protein sequence ID" value="AAF95673.1"/>
    <property type="molecule type" value="Genomic_DNA"/>
</dbReference>
<dbReference type="PIR" id="A82066">
    <property type="entry name" value="A82066"/>
</dbReference>
<dbReference type="RefSeq" id="NP_232160.1">
    <property type="nucleotide sequence ID" value="NC_002505.1"/>
</dbReference>
<dbReference type="SMR" id="Q9KP47"/>
<dbReference type="STRING" id="243277.VC_2532"/>
<dbReference type="DNASU" id="2615195"/>
<dbReference type="EnsemblBacteria" id="AAF95673">
    <property type="protein sequence ID" value="AAF95673"/>
    <property type="gene ID" value="VC_2532"/>
</dbReference>
<dbReference type="KEGG" id="vch:VC_2532"/>
<dbReference type="PATRIC" id="fig|243277.26.peg.2411"/>
<dbReference type="eggNOG" id="COG1660">
    <property type="taxonomic scope" value="Bacteria"/>
</dbReference>
<dbReference type="HOGENOM" id="CLU_059558_1_1_6"/>
<dbReference type="Proteomes" id="UP000000584">
    <property type="component" value="Chromosome 1"/>
</dbReference>
<dbReference type="GO" id="GO:0005524">
    <property type="term" value="F:ATP binding"/>
    <property type="evidence" value="ECO:0007669"/>
    <property type="project" value="UniProtKB-UniRule"/>
</dbReference>
<dbReference type="GO" id="GO:0005525">
    <property type="term" value="F:GTP binding"/>
    <property type="evidence" value="ECO:0007669"/>
    <property type="project" value="UniProtKB-UniRule"/>
</dbReference>
<dbReference type="GO" id="GO:0060090">
    <property type="term" value="F:molecular adaptor activity"/>
    <property type="evidence" value="ECO:0000318"/>
    <property type="project" value="GO_Central"/>
</dbReference>
<dbReference type="HAMAP" id="MF_00636">
    <property type="entry name" value="RapZ_like"/>
    <property type="match status" value="1"/>
</dbReference>
<dbReference type="InterPro" id="IPR027417">
    <property type="entry name" value="P-loop_NTPase"/>
</dbReference>
<dbReference type="InterPro" id="IPR005337">
    <property type="entry name" value="RapZ-like"/>
</dbReference>
<dbReference type="InterPro" id="IPR053930">
    <property type="entry name" value="RapZ-like_N"/>
</dbReference>
<dbReference type="InterPro" id="IPR053931">
    <property type="entry name" value="RapZ_C"/>
</dbReference>
<dbReference type="NCBIfam" id="NF003828">
    <property type="entry name" value="PRK05416.1"/>
    <property type="match status" value="1"/>
</dbReference>
<dbReference type="PANTHER" id="PTHR30448">
    <property type="entry name" value="RNASE ADAPTER PROTEIN RAPZ"/>
    <property type="match status" value="1"/>
</dbReference>
<dbReference type="PANTHER" id="PTHR30448:SF0">
    <property type="entry name" value="RNASE ADAPTER PROTEIN RAPZ"/>
    <property type="match status" value="1"/>
</dbReference>
<dbReference type="Pfam" id="PF22740">
    <property type="entry name" value="PapZ_C"/>
    <property type="match status" value="1"/>
</dbReference>
<dbReference type="Pfam" id="PF03668">
    <property type="entry name" value="RapZ-like_N"/>
    <property type="match status" value="1"/>
</dbReference>
<dbReference type="PIRSF" id="PIRSF005052">
    <property type="entry name" value="P-loopkin"/>
    <property type="match status" value="1"/>
</dbReference>
<dbReference type="SUPFAM" id="SSF52540">
    <property type="entry name" value="P-loop containing nucleoside triphosphate hydrolases"/>
    <property type="match status" value="1"/>
</dbReference>
<gene>
    <name type="ordered locus">VC_2532</name>
</gene>
<reference key="1">
    <citation type="journal article" date="2000" name="Nature">
        <title>DNA sequence of both chromosomes of the cholera pathogen Vibrio cholerae.</title>
        <authorList>
            <person name="Heidelberg J.F."/>
            <person name="Eisen J.A."/>
            <person name="Nelson W.C."/>
            <person name="Clayton R.A."/>
            <person name="Gwinn M.L."/>
            <person name="Dodson R.J."/>
            <person name="Haft D.H."/>
            <person name="Hickey E.K."/>
            <person name="Peterson J.D."/>
            <person name="Umayam L.A."/>
            <person name="Gill S.R."/>
            <person name="Nelson K.E."/>
            <person name="Read T.D."/>
            <person name="Tettelin H."/>
            <person name="Richardson D.L."/>
            <person name="Ermolaeva M.D."/>
            <person name="Vamathevan J.J."/>
            <person name="Bass S."/>
            <person name="Qin H."/>
            <person name="Dragoi I."/>
            <person name="Sellers P."/>
            <person name="McDonald L.A."/>
            <person name="Utterback T.R."/>
            <person name="Fleischmann R.D."/>
            <person name="Nierman W.C."/>
            <person name="White O."/>
            <person name="Salzberg S.L."/>
            <person name="Smith H.O."/>
            <person name="Colwell R.R."/>
            <person name="Mekalanos J.J."/>
            <person name="Venter J.C."/>
            <person name="Fraser C.M."/>
        </authorList>
    </citation>
    <scope>NUCLEOTIDE SEQUENCE [LARGE SCALE GENOMIC DNA]</scope>
    <source>
        <strain>ATCC 39315 / El Tor Inaba N16961</strain>
    </source>
</reference>
<proteinExistence type="inferred from homology"/>
<keyword id="KW-0067">ATP-binding</keyword>
<keyword id="KW-0342">GTP-binding</keyword>
<keyword id="KW-0547">Nucleotide-binding</keyword>
<keyword id="KW-1185">Reference proteome</keyword>
<feature type="chain" id="PRO_0000107783" description="Nucleotide-binding protein VC_2532">
    <location>
        <begin position="1"/>
        <end position="286"/>
    </location>
</feature>
<feature type="binding site" evidence="1">
    <location>
        <begin position="8"/>
        <end position="15"/>
    </location>
    <ligand>
        <name>ATP</name>
        <dbReference type="ChEBI" id="CHEBI:30616"/>
    </ligand>
</feature>
<feature type="binding site" evidence="1">
    <location>
        <begin position="56"/>
        <end position="59"/>
    </location>
    <ligand>
        <name>GTP</name>
        <dbReference type="ChEBI" id="CHEBI:37565"/>
    </ligand>
</feature>